<keyword id="KW-0963">Cytoplasm</keyword>
<keyword id="KW-0444">Lipid biosynthesis</keyword>
<keyword id="KW-0443">Lipid metabolism</keyword>
<keyword id="KW-0594">Phospholipid biosynthesis</keyword>
<keyword id="KW-1208">Phospholipid metabolism</keyword>
<keyword id="KW-1185">Reference proteome</keyword>
<keyword id="KW-0808">Transferase</keyword>
<sequence length="331" mass="35321">MILAVDAMGGDHAPRAIVEGVVQFLAERPTEQIEIRLVGDELKLRSYDIKDPRVKIVHAASVITGEDEPVRAIRRKKDSSLVVAANLVKSNEADALISAGNTGALMTAGLFVIGRIEGIDRPALAPTFPTRNGKGVVILDVGANPDAKAEHLLDYAIMGSVYAEQVRGIKQPKVALLNIGSEAGKGNALTKETYPLLETAPIHFVGNVEAREAMSGEVDVIVTEGFAGNTLLKSTEGAASMIMGVMKEQFMSSFSSKIAALILKPKLKKMKQLLAYEEYGGAGLFGIAAPVIKAHGSSNAYAFSRALVQAEQMVEQQVVTKIIEAKKTKEI</sequence>
<organism>
    <name type="scientific">Exiguobacterium sibiricum (strain DSM 17290 / CCUG 55495 / CIP 109462 / JCM 13490 / 255-15)</name>
    <dbReference type="NCBI Taxonomy" id="262543"/>
    <lineage>
        <taxon>Bacteria</taxon>
        <taxon>Bacillati</taxon>
        <taxon>Bacillota</taxon>
        <taxon>Bacilli</taxon>
        <taxon>Bacillales</taxon>
        <taxon>Bacillales Family XII. Incertae Sedis</taxon>
        <taxon>Exiguobacterium</taxon>
    </lineage>
</organism>
<proteinExistence type="inferred from homology"/>
<evidence type="ECO:0000255" key="1">
    <source>
        <dbReference type="HAMAP-Rule" id="MF_00019"/>
    </source>
</evidence>
<protein>
    <recommendedName>
        <fullName evidence="1">Phosphate acyltransferase</fullName>
        <ecNumber evidence="1">2.3.1.274</ecNumber>
    </recommendedName>
    <alternativeName>
        <fullName evidence="1">Acyl-ACP phosphotransacylase</fullName>
    </alternativeName>
    <alternativeName>
        <fullName evidence="1">Acyl-[acyl-carrier-protein]--phosphate acyltransferase</fullName>
    </alternativeName>
    <alternativeName>
        <fullName evidence="1">Phosphate-acyl-ACP acyltransferase</fullName>
    </alternativeName>
</protein>
<name>PLSX_EXIS2</name>
<accession>B1YIN6</accession>
<reference key="1">
    <citation type="submission" date="2008-04" db="EMBL/GenBank/DDBJ databases">
        <title>Complete sequence of chromosome of Exiguobacterium sibiricum 255-15.</title>
        <authorList>
            <consortium name="US DOE Joint Genome Institute"/>
            <person name="Copeland A."/>
            <person name="Lucas S."/>
            <person name="Lapidus A."/>
            <person name="Glavina del Rio T."/>
            <person name="Dalin E."/>
            <person name="Tice H."/>
            <person name="Bruce D."/>
            <person name="Goodwin L."/>
            <person name="Pitluck S."/>
            <person name="Kiss H."/>
            <person name="Chertkov O."/>
            <person name="Monk C."/>
            <person name="Brettin T."/>
            <person name="Detter J.C."/>
            <person name="Han C."/>
            <person name="Kuske C.R."/>
            <person name="Schmutz J."/>
            <person name="Larimer F."/>
            <person name="Land M."/>
            <person name="Hauser L."/>
            <person name="Kyrpides N."/>
            <person name="Mikhailova N."/>
            <person name="Vishnivetskaya T."/>
            <person name="Rodrigues D.F."/>
            <person name="Gilichinsky D."/>
            <person name="Tiedje J."/>
            <person name="Richardson P."/>
        </authorList>
    </citation>
    <scope>NUCLEOTIDE SEQUENCE [LARGE SCALE GENOMIC DNA]</scope>
    <source>
        <strain>DSM 17290 / CCUG 55495 / CIP 109462 / JCM 13490 / 255-15</strain>
    </source>
</reference>
<gene>
    <name evidence="1" type="primary">plsX</name>
    <name type="ordered locus">Exig_1910</name>
</gene>
<feature type="chain" id="PRO_1000089906" description="Phosphate acyltransferase">
    <location>
        <begin position="1"/>
        <end position="331"/>
    </location>
</feature>
<comment type="function">
    <text evidence="1">Catalyzes the reversible formation of acyl-phosphate (acyl-PO(4)) from acyl-[acyl-carrier-protein] (acyl-ACP). This enzyme utilizes acyl-ACP as fatty acyl donor, but not acyl-CoA.</text>
</comment>
<comment type="catalytic activity">
    <reaction evidence="1">
        <text>a fatty acyl-[ACP] + phosphate = an acyl phosphate + holo-[ACP]</text>
        <dbReference type="Rhea" id="RHEA:42292"/>
        <dbReference type="Rhea" id="RHEA-COMP:9685"/>
        <dbReference type="Rhea" id="RHEA-COMP:14125"/>
        <dbReference type="ChEBI" id="CHEBI:43474"/>
        <dbReference type="ChEBI" id="CHEBI:59918"/>
        <dbReference type="ChEBI" id="CHEBI:64479"/>
        <dbReference type="ChEBI" id="CHEBI:138651"/>
        <dbReference type="EC" id="2.3.1.274"/>
    </reaction>
</comment>
<comment type="pathway">
    <text evidence="1">Lipid metabolism; phospholipid metabolism.</text>
</comment>
<comment type="subunit">
    <text evidence="1">Homodimer. Probably interacts with PlsY.</text>
</comment>
<comment type="subcellular location">
    <subcellularLocation>
        <location evidence="1">Cytoplasm</location>
    </subcellularLocation>
    <text evidence="1">Associated with the membrane possibly through PlsY.</text>
</comment>
<comment type="similarity">
    <text evidence="1">Belongs to the PlsX family.</text>
</comment>
<dbReference type="EC" id="2.3.1.274" evidence="1"/>
<dbReference type="EMBL" id="CP001022">
    <property type="protein sequence ID" value="ACB61362.1"/>
    <property type="molecule type" value="Genomic_DNA"/>
</dbReference>
<dbReference type="RefSeq" id="WP_012370780.1">
    <property type="nucleotide sequence ID" value="NC_010556.1"/>
</dbReference>
<dbReference type="SMR" id="B1YIN6"/>
<dbReference type="STRING" id="262543.Exig_1910"/>
<dbReference type="KEGG" id="esi:Exig_1910"/>
<dbReference type="eggNOG" id="COG0416">
    <property type="taxonomic scope" value="Bacteria"/>
</dbReference>
<dbReference type="HOGENOM" id="CLU_039379_1_1_9"/>
<dbReference type="OrthoDB" id="9806408at2"/>
<dbReference type="UniPathway" id="UPA00085"/>
<dbReference type="Proteomes" id="UP000001681">
    <property type="component" value="Chromosome"/>
</dbReference>
<dbReference type="GO" id="GO:0005737">
    <property type="term" value="C:cytoplasm"/>
    <property type="evidence" value="ECO:0007669"/>
    <property type="project" value="UniProtKB-SubCell"/>
</dbReference>
<dbReference type="GO" id="GO:0043811">
    <property type="term" value="F:phosphate:acyl-[acyl carrier protein] acyltransferase activity"/>
    <property type="evidence" value="ECO:0007669"/>
    <property type="project" value="UniProtKB-UniRule"/>
</dbReference>
<dbReference type="GO" id="GO:0006633">
    <property type="term" value="P:fatty acid biosynthetic process"/>
    <property type="evidence" value="ECO:0007669"/>
    <property type="project" value="UniProtKB-UniRule"/>
</dbReference>
<dbReference type="GO" id="GO:0008654">
    <property type="term" value="P:phospholipid biosynthetic process"/>
    <property type="evidence" value="ECO:0007669"/>
    <property type="project" value="UniProtKB-KW"/>
</dbReference>
<dbReference type="Gene3D" id="3.40.718.10">
    <property type="entry name" value="Isopropylmalate Dehydrogenase"/>
    <property type="match status" value="1"/>
</dbReference>
<dbReference type="HAMAP" id="MF_00019">
    <property type="entry name" value="PlsX"/>
    <property type="match status" value="1"/>
</dbReference>
<dbReference type="InterPro" id="IPR003664">
    <property type="entry name" value="FA_synthesis"/>
</dbReference>
<dbReference type="InterPro" id="IPR012281">
    <property type="entry name" value="Phospholipid_synth_PlsX-like"/>
</dbReference>
<dbReference type="NCBIfam" id="TIGR00182">
    <property type="entry name" value="plsX"/>
    <property type="match status" value="1"/>
</dbReference>
<dbReference type="PANTHER" id="PTHR30100">
    <property type="entry name" value="FATTY ACID/PHOSPHOLIPID SYNTHESIS PROTEIN PLSX"/>
    <property type="match status" value="1"/>
</dbReference>
<dbReference type="PANTHER" id="PTHR30100:SF1">
    <property type="entry name" value="PHOSPHATE ACYLTRANSFERASE"/>
    <property type="match status" value="1"/>
</dbReference>
<dbReference type="Pfam" id="PF02504">
    <property type="entry name" value="FA_synthesis"/>
    <property type="match status" value="1"/>
</dbReference>
<dbReference type="PIRSF" id="PIRSF002465">
    <property type="entry name" value="Phsphlp_syn_PlsX"/>
    <property type="match status" value="1"/>
</dbReference>
<dbReference type="SUPFAM" id="SSF53659">
    <property type="entry name" value="Isocitrate/Isopropylmalate dehydrogenase-like"/>
    <property type="match status" value="1"/>
</dbReference>